<name>RL38_AERPE</name>
<evidence type="ECO:0000305" key="1"/>
<comment type="similarity">
    <text evidence="1">Belongs to the eukaryotic ribosomal protein eL38 family.</text>
</comment>
<proteinExistence type="inferred from homology"/>
<keyword id="KW-1185">Reference proteome</keyword>
<keyword id="KW-0687">Ribonucleoprotein</keyword>
<keyword id="KW-0689">Ribosomal protein</keyword>
<protein>
    <recommendedName>
        <fullName evidence="1">Large ribosomal subunit protein eL38</fullName>
    </recommendedName>
    <alternativeName>
        <fullName>50S ribosomal protein L38E</fullName>
    </alternativeName>
</protein>
<gene>
    <name type="primary">rpl38e</name>
    <name type="ordered locus">APE_0179a</name>
    <name type="ORF">APES003</name>
</gene>
<feature type="chain" id="PRO_0000215446" description="Large ribosomal subunit protein eL38">
    <location>
        <begin position="1"/>
        <end position="67"/>
    </location>
</feature>
<reference key="1">
    <citation type="journal article" date="1999" name="DNA Res.">
        <title>Complete genome sequence of an aerobic hyper-thermophilic crenarchaeon, Aeropyrum pernix K1.</title>
        <authorList>
            <person name="Kawarabayasi Y."/>
            <person name="Hino Y."/>
            <person name="Horikawa H."/>
            <person name="Yamazaki S."/>
            <person name="Haikawa Y."/>
            <person name="Jin-no K."/>
            <person name="Takahashi M."/>
            <person name="Sekine M."/>
            <person name="Baba S."/>
            <person name="Ankai A."/>
            <person name="Kosugi H."/>
            <person name="Hosoyama A."/>
            <person name="Fukui S."/>
            <person name="Nagai Y."/>
            <person name="Nishijima K."/>
            <person name="Nakazawa H."/>
            <person name="Takamiya M."/>
            <person name="Masuda S."/>
            <person name="Funahashi T."/>
            <person name="Tanaka T."/>
            <person name="Kudoh Y."/>
            <person name="Yamazaki J."/>
            <person name="Kushida N."/>
            <person name="Oguchi A."/>
            <person name="Aoki K."/>
            <person name="Kubota K."/>
            <person name="Nakamura Y."/>
            <person name="Nomura N."/>
            <person name="Sako Y."/>
            <person name="Kikuchi H."/>
        </authorList>
    </citation>
    <scope>NUCLEOTIDE SEQUENCE [LARGE SCALE GENOMIC DNA]</scope>
    <source>
        <strain>ATCC 700893 / DSM 11879 / JCM 9820 / NBRC 100138 / K1</strain>
    </source>
</reference>
<dbReference type="EMBL" id="BA000002">
    <property type="protein sequence ID" value="BAA79092.1"/>
    <property type="molecule type" value="Genomic_DNA"/>
</dbReference>
<dbReference type="PIR" id="B72774">
    <property type="entry name" value="B72774"/>
</dbReference>
<dbReference type="RefSeq" id="WP_010865550.1">
    <property type="nucleotide sequence ID" value="NC_000854.2"/>
</dbReference>
<dbReference type="SMR" id="Q9YFR9"/>
<dbReference type="STRING" id="272557.APE_0179a"/>
<dbReference type="EnsemblBacteria" id="BAA79092">
    <property type="protein sequence ID" value="BAA79092"/>
    <property type="gene ID" value="APE_0179a"/>
</dbReference>
<dbReference type="GeneID" id="1445708"/>
<dbReference type="KEGG" id="ape:APE_0179a"/>
<dbReference type="eggNOG" id="arCOG04057">
    <property type="taxonomic scope" value="Archaea"/>
</dbReference>
<dbReference type="Proteomes" id="UP000002518">
    <property type="component" value="Chromosome"/>
</dbReference>
<dbReference type="GO" id="GO:1990904">
    <property type="term" value="C:ribonucleoprotein complex"/>
    <property type="evidence" value="ECO:0007669"/>
    <property type="project" value="UniProtKB-KW"/>
</dbReference>
<dbReference type="GO" id="GO:0005840">
    <property type="term" value="C:ribosome"/>
    <property type="evidence" value="ECO:0007669"/>
    <property type="project" value="UniProtKB-KW"/>
</dbReference>
<dbReference type="GO" id="GO:0003735">
    <property type="term" value="F:structural constituent of ribosome"/>
    <property type="evidence" value="ECO:0007669"/>
    <property type="project" value="InterPro"/>
</dbReference>
<dbReference type="GO" id="GO:0006412">
    <property type="term" value="P:translation"/>
    <property type="evidence" value="ECO:0007669"/>
    <property type="project" value="InterPro"/>
</dbReference>
<dbReference type="Gene3D" id="3.30.720.90">
    <property type="match status" value="1"/>
</dbReference>
<dbReference type="InterPro" id="IPR002675">
    <property type="entry name" value="Ribosomal_eL38"/>
</dbReference>
<dbReference type="InterPro" id="IPR038464">
    <property type="entry name" value="Ribosomal_eL38_sf"/>
</dbReference>
<dbReference type="Pfam" id="PF01781">
    <property type="entry name" value="Ribosomal_L38e"/>
    <property type="match status" value="1"/>
</dbReference>
<organism>
    <name type="scientific">Aeropyrum pernix (strain ATCC 700893 / DSM 11879 / JCM 9820 / NBRC 100138 / K1)</name>
    <dbReference type="NCBI Taxonomy" id="272557"/>
    <lineage>
        <taxon>Archaea</taxon>
        <taxon>Thermoproteota</taxon>
        <taxon>Thermoprotei</taxon>
        <taxon>Desulfurococcales</taxon>
        <taxon>Desulfurococcaceae</taxon>
        <taxon>Aeropyrum</taxon>
    </lineage>
</organism>
<sequence>MPVELKSFDEFVKVVERAVECRVKRGKDVVKIKARTKRYLYTLKVPPEKEAEVLEQVKAKCKNLVEL</sequence>
<accession>Q9YFR9</accession>